<gene>
    <name type="primary">CLDN12</name>
</gene>
<comment type="function">
    <text evidence="1">Plays a major role in tight junction-specific obliteration of the intercellular space, through calcium-independent cell-adhesion activity.</text>
</comment>
<comment type="subunit">
    <text evidence="2">Interacts with OCLN.</text>
</comment>
<comment type="subcellular location">
    <subcellularLocation>
        <location evidence="3">Cell junction</location>
        <location evidence="3">Tight junction</location>
    </subcellularLocation>
    <subcellularLocation>
        <location evidence="2">Cell membrane</location>
        <topology evidence="4">Multi-pass membrane protein</topology>
    </subcellularLocation>
</comment>
<comment type="similarity">
    <text evidence="5">Belongs to the claudin family.</text>
</comment>
<organism>
    <name type="scientific">Pongo abelii</name>
    <name type="common">Sumatran orangutan</name>
    <name type="synonym">Pongo pygmaeus abelii</name>
    <dbReference type="NCBI Taxonomy" id="9601"/>
    <lineage>
        <taxon>Eukaryota</taxon>
        <taxon>Metazoa</taxon>
        <taxon>Chordata</taxon>
        <taxon>Craniata</taxon>
        <taxon>Vertebrata</taxon>
        <taxon>Euteleostomi</taxon>
        <taxon>Mammalia</taxon>
        <taxon>Eutheria</taxon>
        <taxon>Euarchontoglires</taxon>
        <taxon>Primates</taxon>
        <taxon>Haplorrhini</taxon>
        <taxon>Catarrhini</taxon>
        <taxon>Hominidae</taxon>
        <taxon>Pongo</taxon>
    </lineage>
</organism>
<feature type="chain" id="PRO_0000144767" description="Claudin-12">
    <location>
        <begin position="1"/>
        <end position="244"/>
    </location>
</feature>
<feature type="topological domain" description="Cytoplasmic" evidence="4">
    <location>
        <begin position="1"/>
        <end position="10"/>
    </location>
</feature>
<feature type="transmembrane region" description="Helical" evidence="4">
    <location>
        <begin position="11"/>
        <end position="31"/>
    </location>
</feature>
<feature type="topological domain" description="Extracellular" evidence="4">
    <location>
        <begin position="32"/>
        <end position="87"/>
    </location>
</feature>
<feature type="transmembrane region" description="Helical" evidence="4">
    <location>
        <begin position="88"/>
        <end position="108"/>
    </location>
</feature>
<feature type="topological domain" description="Cytoplasmic" evidence="4">
    <location>
        <begin position="109"/>
        <end position="135"/>
    </location>
</feature>
<feature type="transmembrane region" description="Helical" evidence="4">
    <location>
        <begin position="136"/>
        <end position="156"/>
    </location>
</feature>
<feature type="topological domain" description="Extracellular" evidence="4">
    <location>
        <begin position="157"/>
        <end position="174"/>
    </location>
</feature>
<feature type="transmembrane region" description="Helical" evidence="4">
    <location>
        <begin position="175"/>
        <end position="195"/>
    </location>
</feature>
<feature type="topological domain" description="Cytoplasmic" evidence="4">
    <location>
        <begin position="196"/>
        <end position="244"/>
    </location>
</feature>
<feature type="modified residue" description="Phosphoserine" evidence="2">
    <location>
        <position position="228"/>
    </location>
</feature>
<feature type="modified residue" description="Phosphoserine" evidence="2">
    <location>
        <position position="231"/>
    </location>
</feature>
<accession>Q5R9K1</accession>
<evidence type="ECO:0000250" key="1"/>
<evidence type="ECO:0000250" key="2">
    <source>
        <dbReference type="UniProtKB" id="P56749"/>
    </source>
</evidence>
<evidence type="ECO:0000250" key="3">
    <source>
        <dbReference type="UniProtKB" id="Q9ET43"/>
    </source>
</evidence>
<evidence type="ECO:0000255" key="4"/>
<evidence type="ECO:0000305" key="5"/>
<name>CLD12_PONAB</name>
<protein>
    <recommendedName>
        <fullName>Claudin-12</fullName>
    </recommendedName>
</protein>
<proteinExistence type="evidence at transcript level"/>
<dbReference type="EMBL" id="CR859386">
    <property type="protein sequence ID" value="CAH91559.1"/>
    <property type="molecule type" value="mRNA"/>
</dbReference>
<dbReference type="RefSeq" id="NP_001127432.1">
    <property type="nucleotide sequence ID" value="NM_001133960.1"/>
</dbReference>
<dbReference type="RefSeq" id="XP_009241309.1">
    <property type="nucleotide sequence ID" value="XM_009243034.1"/>
</dbReference>
<dbReference type="RefSeq" id="XP_054415059.1">
    <property type="nucleotide sequence ID" value="XM_054559084.2"/>
</dbReference>
<dbReference type="FunCoup" id="Q5R9K1">
    <property type="interactions" value="173"/>
</dbReference>
<dbReference type="STRING" id="9601.ENSPPYP00000019983"/>
<dbReference type="Ensembl" id="ENSPPYT00000020771.2">
    <property type="protein sequence ID" value="ENSPPYP00000019983.1"/>
    <property type="gene ID" value="ENSPPYG00000017829.2"/>
</dbReference>
<dbReference type="GeneID" id="100174503"/>
<dbReference type="KEGG" id="pon:100174503"/>
<dbReference type="CTD" id="9069"/>
<dbReference type="eggNOG" id="ENOG502QR4G">
    <property type="taxonomic scope" value="Eukaryota"/>
</dbReference>
<dbReference type="GeneTree" id="ENSGT00400000022250"/>
<dbReference type="HOGENOM" id="CLU_063070_0_0_1"/>
<dbReference type="InParanoid" id="Q5R9K1"/>
<dbReference type="OMA" id="FYNTHLN"/>
<dbReference type="OrthoDB" id="3031595at2759"/>
<dbReference type="TreeFam" id="TF331972"/>
<dbReference type="Proteomes" id="UP000001595">
    <property type="component" value="Chromosome 7"/>
</dbReference>
<dbReference type="GO" id="GO:0005923">
    <property type="term" value="C:bicellular tight junction"/>
    <property type="evidence" value="ECO:0007669"/>
    <property type="project" value="UniProtKB-SubCell"/>
</dbReference>
<dbReference type="GO" id="GO:0016328">
    <property type="term" value="C:lateral plasma membrane"/>
    <property type="evidence" value="ECO:0007669"/>
    <property type="project" value="Ensembl"/>
</dbReference>
<dbReference type="FunFam" id="1.20.140.150:FF:000017">
    <property type="entry name" value="Claudin-12 (Predicted)"/>
    <property type="match status" value="1"/>
</dbReference>
<dbReference type="Gene3D" id="1.20.140.150">
    <property type="match status" value="1"/>
</dbReference>
<dbReference type="InterPro" id="IPR013287">
    <property type="entry name" value="Claudin12"/>
</dbReference>
<dbReference type="InterPro" id="IPR017974">
    <property type="entry name" value="Claudin_CS"/>
</dbReference>
<dbReference type="PANTHER" id="PTHR16703">
    <property type="entry name" value="CLAUDIN-12"/>
    <property type="match status" value="1"/>
</dbReference>
<dbReference type="PANTHER" id="PTHR16703:SF3">
    <property type="entry name" value="CLAUDIN-12"/>
    <property type="match status" value="1"/>
</dbReference>
<dbReference type="PRINTS" id="PR01872">
    <property type="entry name" value="CLAUDIN12"/>
</dbReference>
<dbReference type="PROSITE" id="PS01346">
    <property type="entry name" value="CLAUDIN"/>
    <property type="match status" value="1"/>
</dbReference>
<sequence>MGCRDVHAATVLSFLCGIASVAGLFAGTLLPNWRKLRLITFNRNEKNLTVYTGLWVKCARYDGSSDCLMYDTTWYSSVDQLDLRVLQFALPLSMLIAMGALLLCLIGMCNTAFRSSVPNIKLAKCLVNSAGCHLVAGLLFFLAGTVSLSPSIWVIFYNIHLNKKFEPVFSFDYAVYVTIASAGGLFMTSLILFIWYCTCKSLPSPFWQPLYSHPPSMHTYSQPYSARSRLSAIEIDIPVVSHTT</sequence>
<keyword id="KW-0965">Cell junction</keyword>
<keyword id="KW-1003">Cell membrane</keyword>
<keyword id="KW-0472">Membrane</keyword>
<keyword id="KW-0597">Phosphoprotein</keyword>
<keyword id="KW-1185">Reference proteome</keyword>
<keyword id="KW-0796">Tight junction</keyword>
<keyword id="KW-0812">Transmembrane</keyword>
<keyword id="KW-1133">Transmembrane helix</keyword>
<reference key="1">
    <citation type="submission" date="2004-11" db="EMBL/GenBank/DDBJ databases">
        <authorList>
            <consortium name="The German cDNA consortium"/>
        </authorList>
    </citation>
    <scope>NUCLEOTIDE SEQUENCE [LARGE SCALE MRNA]</scope>
    <source>
        <tissue>Kidney</tissue>
    </source>
</reference>